<organism>
    <name type="scientific">Acanthamoeba polyphaga mimivirus</name>
    <name type="common">APMV</name>
    <dbReference type="NCBI Taxonomy" id="212035"/>
    <lineage>
        <taxon>Viruses</taxon>
        <taxon>Varidnaviria</taxon>
        <taxon>Bamfordvirae</taxon>
        <taxon>Nucleocytoviricota</taxon>
        <taxon>Megaviricetes</taxon>
        <taxon>Imitervirales</taxon>
        <taxon>Mimiviridae</taxon>
        <taxon>Megamimivirinae</taxon>
        <taxon>Mimivirus</taxon>
        <taxon>Mimivirus bradfordmassiliense</taxon>
    </lineage>
</organism>
<gene>
    <name type="ordered locus">MIMI_R277</name>
</gene>
<sequence>MDRQLIIVIGLPGSGKTHLCREISSLDSSRQIVDDFIGSFYNGNVMNLLTGKCKLCINDPRLCLKNVFKRFIKIFEQDIGQENIYLILFENNPEQCKFNVQNRNDNRKGILEIVDQYSQRYDIATYSKYDYEIRTVFK</sequence>
<organismHost>
    <name type="scientific">Acanthamoeba polyphaga</name>
    <name type="common">Amoeba</name>
    <dbReference type="NCBI Taxonomy" id="5757"/>
</organismHost>
<evidence type="ECO:0000250" key="1"/>
<reference key="1">
    <citation type="journal article" date="2004" name="Science">
        <title>The 1.2-megabase genome sequence of Mimivirus.</title>
        <authorList>
            <person name="Raoult D."/>
            <person name="Audic S."/>
            <person name="Robert C."/>
            <person name="Abergel C."/>
            <person name="Renesto P."/>
            <person name="Ogata H."/>
            <person name="La Scola B."/>
            <person name="Susan M."/>
            <person name="Claverie J.-M."/>
        </authorList>
    </citation>
    <scope>NUCLEOTIDE SEQUENCE [LARGE SCALE GENOMIC DNA]</scope>
    <source>
        <strain>Rowbotham-Bradford</strain>
    </source>
</reference>
<protein>
    <recommendedName>
        <fullName>Uncharacterized protein R277</fullName>
    </recommendedName>
</protein>
<keyword id="KW-0067">ATP-binding</keyword>
<keyword id="KW-0547">Nucleotide-binding</keyword>
<keyword id="KW-1185">Reference proteome</keyword>
<proteinExistence type="predicted"/>
<feature type="chain" id="PRO_0000309551" description="Uncharacterized protein R277">
    <location>
        <begin position="1"/>
        <end position="138"/>
    </location>
</feature>
<feature type="binding site" evidence="1">
    <location>
        <begin position="35"/>
        <end position="42"/>
    </location>
    <ligand>
        <name>ATP</name>
        <dbReference type="ChEBI" id="CHEBI:30616"/>
    </ligand>
</feature>
<name>YR277_MIMIV</name>
<dbReference type="EMBL" id="AY653733">
    <property type="protein sequence ID" value="AAV50549.1"/>
    <property type="molecule type" value="Genomic_DNA"/>
</dbReference>
<dbReference type="SMR" id="Q5UPV7"/>
<dbReference type="KEGG" id="vg:9924891"/>
<dbReference type="OrthoDB" id="37168at10239"/>
<dbReference type="Proteomes" id="UP000001134">
    <property type="component" value="Genome"/>
</dbReference>
<dbReference type="GO" id="GO:0005524">
    <property type="term" value="F:ATP binding"/>
    <property type="evidence" value="ECO:0007669"/>
    <property type="project" value="UniProtKB-KW"/>
</dbReference>
<dbReference type="Gene3D" id="3.40.50.300">
    <property type="entry name" value="P-loop containing nucleotide triphosphate hydrolases"/>
    <property type="match status" value="1"/>
</dbReference>
<dbReference type="InterPro" id="IPR027417">
    <property type="entry name" value="P-loop_NTPase"/>
</dbReference>
<dbReference type="SUPFAM" id="SSF52540">
    <property type="entry name" value="P-loop containing nucleoside triphosphate hydrolases"/>
    <property type="match status" value="1"/>
</dbReference>
<accession>Q5UPV7</accession>